<reference key="1">
    <citation type="journal article" date="2009" name="Proc. Natl. Acad. Sci. U.S.A.">
        <title>Biogeography of the Sulfolobus islandicus pan-genome.</title>
        <authorList>
            <person name="Reno M.L."/>
            <person name="Held N.L."/>
            <person name="Fields C.J."/>
            <person name="Burke P.V."/>
            <person name="Whitaker R.J."/>
        </authorList>
    </citation>
    <scope>NUCLEOTIDE SEQUENCE [LARGE SCALE GENOMIC DNA]</scope>
    <source>
        <strain>M.16.4 / Kamchatka #3</strain>
    </source>
</reference>
<evidence type="ECO:0000255" key="1">
    <source>
        <dbReference type="HAMAP-Rule" id="MF_00713"/>
    </source>
</evidence>
<proteinExistence type="inferred from homology"/>
<comment type="function">
    <text evidence="1">The glycine cleavage system catalyzes the degradation of glycine. The P protein binds the alpha-amino group of glycine through its pyridoxal phosphate cofactor; CO(2) is released and the remaining methylamine moiety is then transferred to the lipoamide cofactor of the H protein.</text>
</comment>
<comment type="catalytic activity">
    <reaction evidence="1">
        <text>N(6)-[(R)-lipoyl]-L-lysyl-[glycine-cleavage complex H protein] + glycine + H(+) = N(6)-[(R)-S(8)-aminomethyldihydrolipoyl]-L-lysyl-[glycine-cleavage complex H protein] + CO2</text>
        <dbReference type="Rhea" id="RHEA:24304"/>
        <dbReference type="Rhea" id="RHEA-COMP:10494"/>
        <dbReference type="Rhea" id="RHEA-COMP:10495"/>
        <dbReference type="ChEBI" id="CHEBI:15378"/>
        <dbReference type="ChEBI" id="CHEBI:16526"/>
        <dbReference type="ChEBI" id="CHEBI:57305"/>
        <dbReference type="ChEBI" id="CHEBI:83099"/>
        <dbReference type="ChEBI" id="CHEBI:83143"/>
        <dbReference type="EC" id="1.4.4.2"/>
    </reaction>
</comment>
<comment type="cofactor">
    <cofactor evidence="1">
        <name>pyridoxal 5'-phosphate</name>
        <dbReference type="ChEBI" id="CHEBI:597326"/>
    </cofactor>
</comment>
<comment type="subunit">
    <text evidence="1">The glycine cleavage system is composed of four proteins: P, T, L and H. In this organism, the P 'protein' is a heterodimer of two subunits.</text>
</comment>
<comment type="similarity">
    <text evidence="1">Belongs to the GcvP family. C-terminal subunit subfamily.</text>
</comment>
<keyword id="KW-0560">Oxidoreductase</keyword>
<keyword id="KW-0663">Pyridoxal phosphate</keyword>
<protein>
    <recommendedName>
        <fullName evidence="1">Probable glycine dehydrogenase (decarboxylating) subunit 2</fullName>
        <ecNumber evidence="1">1.4.4.2</ecNumber>
    </recommendedName>
    <alternativeName>
        <fullName evidence="1">Glycine cleavage system P-protein subunit 2</fullName>
    </alternativeName>
    <alternativeName>
        <fullName evidence="1">Glycine decarboxylase subunit 2</fullName>
    </alternativeName>
    <alternativeName>
        <fullName evidence="1">Glycine dehydrogenase (aminomethyl-transferring) subunit 2</fullName>
    </alternativeName>
</protein>
<organism>
    <name type="scientific">Saccharolobus islandicus (strain M.16.4 / Kamchatka #3)</name>
    <name type="common">Sulfolobus islandicus</name>
    <dbReference type="NCBI Taxonomy" id="426118"/>
    <lineage>
        <taxon>Archaea</taxon>
        <taxon>Thermoproteota</taxon>
        <taxon>Thermoprotei</taxon>
        <taxon>Sulfolobales</taxon>
        <taxon>Sulfolobaceae</taxon>
        <taxon>Saccharolobus</taxon>
    </lineage>
</organism>
<dbReference type="EC" id="1.4.4.2" evidence="1"/>
<dbReference type="EMBL" id="CP001402">
    <property type="protein sequence ID" value="ACR41892.1"/>
    <property type="molecule type" value="Genomic_DNA"/>
</dbReference>
<dbReference type="RefSeq" id="WP_012711310.1">
    <property type="nucleotide sequence ID" value="NC_012726.1"/>
</dbReference>
<dbReference type="SMR" id="C4KH28"/>
<dbReference type="GeneID" id="84061617"/>
<dbReference type="KEGG" id="sid:M164_1287"/>
<dbReference type="HOGENOM" id="CLU_004620_5_0_2"/>
<dbReference type="Proteomes" id="UP000001479">
    <property type="component" value="Chromosome"/>
</dbReference>
<dbReference type="GO" id="GO:0005829">
    <property type="term" value="C:cytosol"/>
    <property type="evidence" value="ECO:0007669"/>
    <property type="project" value="TreeGrafter"/>
</dbReference>
<dbReference type="GO" id="GO:0005960">
    <property type="term" value="C:glycine cleavage complex"/>
    <property type="evidence" value="ECO:0007669"/>
    <property type="project" value="TreeGrafter"/>
</dbReference>
<dbReference type="GO" id="GO:0016594">
    <property type="term" value="F:glycine binding"/>
    <property type="evidence" value="ECO:0007669"/>
    <property type="project" value="TreeGrafter"/>
</dbReference>
<dbReference type="GO" id="GO:0004375">
    <property type="term" value="F:glycine dehydrogenase (decarboxylating) activity"/>
    <property type="evidence" value="ECO:0007669"/>
    <property type="project" value="UniProtKB-EC"/>
</dbReference>
<dbReference type="GO" id="GO:0030170">
    <property type="term" value="F:pyridoxal phosphate binding"/>
    <property type="evidence" value="ECO:0007669"/>
    <property type="project" value="TreeGrafter"/>
</dbReference>
<dbReference type="GO" id="GO:0019464">
    <property type="term" value="P:glycine decarboxylation via glycine cleavage system"/>
    <property type="evidence" value="ECO:0007669"/>
    <property type="project" value="UniProtKB-UniRule"/>
</dbReference>
<dbReference type="CDD" id="cd00613">
    <property type="entry name" value="GDC-P"/>
    <property type="match status" value="1"/>
</dbReference>
<dbReference type="FunFam" id="3.40.640.10:FF:000224">
    <property type="entry name" value="Probable glycine dehydrogenase (decarboxylating) subunit 2"/>
    <property type="match status" value="1"/>
</dbReference>
<dbReference type="FunFam" id="3.90.1150.10:FF:000014">
    <property type="entry name" value="Probable glycine dehydrogenase (decarboxylating) subunit 2"/>
    <property type="match status" value="1"/>
</dbReference>
<dbReference type="Gene3D" id="6.20.440.10">
    <property type="match status" value="1"/>
</dbReference>
<dbReference type="Gene3D" id="3.90.1150.10">
    <property type="entry name" value="Aspartate Aminotransferase, domain 1"/>
    <property type="match status" value="1"/>
</dbReference>
<dbReference type="Gene3D" id="3.40.640.10">
    <property type="entry name" value="Type I PLP-dependent aspartate aminotransferase-like (Major domain)"/>
    <property type="match status" value="1"/>
</dbReference>
<dbReference type="HAMAP" id="MF_00713">
    <property type="entry name" value="GcvPB"/>
    <property type="match status" value="1"/>
</dbReference>
<dbReference type="InterPro" id="IPR023012">
    <property type="entry name" value="GcvPB"/>
</dbReference>
<dbReference type="InterPro" id="IPR049316">
    <property type="entry name" value="GDC-P_C"/>
</dbReference>
<dbReference type="InterPro" id="IPR049315">
    <property type="entry name" value="GDC-P_N"/>
</dbReference>
<dbReference type="InterPro" id="IPR020581">
    <property type="entry name" value="GDC_P"/>
</dbReference>
<dbReference type="InterPro" id="IPR015424">
    <property type="entry name" value="PyrdxlP-dep_Trfase"/>
</dbReference>
<dbReference type="InterPro" id="IPR015421">
    <property type="entry name" value="PyrdxlP-dep_Trfase_major"/>
</dbReference>
<dbReference type="InterPro" id="IPR015422">
    <property type="entry name" value="PyrdxlP-dep_Trfase_small"/>
</dbReference>
<dbReference type="NCBIfam" id="NF003346">
    <property type="entry name" value="PRK04366.1"/>
    <property type="match status" value="1"/>
</dbReference>
<dbReference type="PANTHER" id="PTHR11773:SF1">
    <property type="entry name" value="GLYCINE DEHYDROGENASE (DECARBOXYLATING), MITOCHONDRIAL"/>
    <property type="match status" value="1"/>
</dbReference>
<dbReference type="PANTHER" id="PTHR11773">
    <property type="entry name" value="GLYCINE DEHYDROGENASE, DECARBOXYLATING"/>
    <property type="match status" value="1"/>
</dbReference>
<dbReference type="Pfam" id="PF21478">
    <property type="entry name" value="GcvP2_C"/>
    <property type="match status" value="1"/>
</dbReference>
<dbReference type="Pfam" id="PF02347">
    <property type="entry name" value="GDC-P"/>
    <property type="match status" value="1"/>
</dbReference>
<dbReference type="SUPFAM" id="SSF53383">
    <property type="entry name" value="PLP-dependent transferases"/>
    <property type="match status" value="1"/>
</dbReference>
<name>GCSPB_SACI6</name>
<gene>
    <name evidence="1" type="primary">gcvPB</name>
    <name type="ordered locus">M164_1287</name>
</gene>
<sequence>MVWRQAKWDEPLIFELNNSGANRQGLLINKDDEIRSEIKEMKIPKNLLRENGPNLPSLSELEVVRHFIRLSQMNFGVDVGIMPLGSCTMKYNPKIEEKATAITESHHPLEDEDHVQGILEMIYELQNWFSEITGMDECSLQVPAGSAGEFAGVLMIKKYHEDHNRNYKDTMLVADTAHGTNPASAAMAGYKVMYVKSNGEGLVDMDILREIVNDKTAGFMLTNPNTLGLFEENILEISKIIHSANAILYYDGANLNGVLGIARPGDMGFDIVHLNLHKTFAVPHGGGGPGAGAICAKGELVNYLPYPMVEKVNGKYRLSKIPKNSVGKIATFYGNVGNLARSFAYLLGLGPQGVQMVGKMSTLATNYLIAKLRDIKELELIAPNRHRKHEVVFSVKQLMENYGVSANDVAKALLDSGFYAPTIYFPPIIEEALMIEPTETESKETLDMFAEALKKIVEDAKRNPEQLLKSPSNTSIARLDQAYANHPSTITPTYRVLKLRRMGKINYLK</sequence>
<feature type="chain" id="PRO_1000212674" description="Probable glycine dehydrogenase (decarboxylating) subunit 2">
    <location>
        <begin position="1"/>
        <end position="509"/>
    </location>
</feature>
<feature type="modified residue" description="N6-(pyridoxal phosphate)lysine" evidence="1">
    <location>
        <position position="278"/>
    </location>
</feature>
<accession>C4KH28</accession>